<accession>B8ECA4</accession>
<protein>
    <recommendedName>
        <fullName evidence="1">tRNA dimethylallyltransferase</fullName>
        <ecNumber evidence="1">2.5.1.75</ecNumber>
    </recommendedName>
    <alternativeName>
        <fullName evidence="1">Dimethylallyl diphosphate:tRNA dimethylallyltransferase</fullName>
        <shortName evidence="1">DMAPP:tRNA dimethylallyltransferase</shortName>
        <shortName evidence="1">DMATase</shortName>
    </alternativeName>
    <alternativeName>
        <fullName evidence="1">Isopentenyl-diphosphate:tRNA isopentenyltransferase</fullName>
        <shortName evidence="1">IPP transferase</shortName>
        <shortName evidence="1">IPPT</shortName>
        <shortName evidence="1">IPTase</shortName>
    </alternativeName>
</protein>
<evidence type="ECO:0000255" key="1">
    <source>
        <dbReference type="HAMAP-Rule" id="MF_00185"/>
    </source>
</evidence>
<feature type="chain" id="PRO_0000377311" description="tRNA dimethylallyltransferase">
    <location>
        <begin position="1"/>
        <end position="308"/>
    </location>
</feature>
<feature type="region of interest" description="Interaction with substrate tRNA" evidence="1">
    <location>
        <begin position="39"/>
        <end position="42"/>
    </location>
</feature>
<feature type="region of interest" description="Interaction with substrate tRNA" evidence="1">
    <location>
        <begin position="163"/>
        <end position="167"/>
    </location>
</feature>
<feature type="region of interest" description="Interaction with substrate tRNA" evidence="1">
    <location>
        <begin position="244"/>
        <end position="249"/>
    </location>
</feature>
<feature type="binding site" evidence="1">
    <location>
        <begin position="14"/>
        <end position="21"/>
    </location>
    <ligand>
        <name>ATP</name>
        <dbReference type="ChEBI" id="CHEBI:30616"/>
    </ligand>
</feature>
<feature type="binding site" evidence="1">
    <location>
        <begin position="16"/>
        <end position="21"/>
    </location>
    <ligand>
        <name>substrate</name>
    </ligand>
</feature>
<feature type="site" description="Interaction with substrate tRNA" evidence="1">
    <location>
        <position position="105"/>
    </location>
</feature>
<feature type="site" description="Interaction with substrate tRNA" evidence="1">
    <location>
        <position position="127"/>
    </location>
</feature>
<sequence length="308" mass="34649">MNKELQPKVIFLMGPTASGKTALALELAEKHNCEIISVDSALIYRGMDIGSAKPSADELARGPHRLIDIRDPRESYSAADFRADAIAEIELIVSMGKTPVLVGGTMMYFKALLEGLSPLPSADEAIRAEIQAEADEKGWEALHDQLREIDPVSAERIHPNDPQRLSRALEVYRISGKSMTELTQTKSAPLPYEVVQFAIAPRERKVLHDLIAQRFAIMLKQGFLEEVTELKARGDLHLDLPSMRCVGYRQCWQYLDGEFDYDTMVEKAVAATRQLAKRQLTWLRSWPELNWLESGAEGNLVTLMRQCR</sequence>
<keyword id="KW-0067">ATP-binding</keyword>
<keyword id="KW-0460">Magnesium</keyword>
<keyword id="KW-0547">Nucleotide-binding</keyword>
<keyword id="KW-0808">Transferase</keyword>
<keyword id="KW-0819">tRNA processing</keyword>
<gene>
    <name evidence="1" type="primary">miaA</name>
    <name type="ordered locus">Sbal223_3711</name>
</gene>
<comment type="function">
    <text evidence="1">Catalyzes the transfer of a dimethylallyl group onto the adenine at position 37 in tRNAs that read codons beginning with uridine, leading to the formation of N6-(dimethylallyl)adenosine (i(6)A).</text>
</comment>
<comment type="catalytic activity">
    <reaction evidence="1">
        <text>adenosine(37) in tRNA + dimethylallyl diphosphate = N(6)-dimethylallyladenosine(37) in tRNA + diphosphate</text>
        <dbReference type="Rhea" id="RHEA:26482"/>
        <dbReference type="Rhea" id="RHEA-COMP:10162"/>
        <dbReference type="Rhea" id="RHEA-COMP:10375"/>
        <dbReference type="ChEBI" id="CHEBI:33019"/>
        <dbReference type="ChEBI" id="CHEBI:57623"/>
        <dbReference type="ChEBI" id="CHEBI:74411"/>
        <dbReference type="ChEBI" id="CHEBI:74415"/>
        <dbReference type="EC" id="2.5.1.75"/>
    </reaction>
</comment>
<comment type="cofactor">
    <cofactor evidence="1">
        <name>Mg(2+)</name>
        <dbReference type="ChEBI" id="CHEBI:18420"/>
    </cofactor>
</comment>
<comment type="subunit">
    <text evidence="1">Monomer.</text>
</comment>
<comment type="similarity">
    <text evidence="1">Belongs to the IPP transferase family.</text>
</comment>
<proteinExistence type="inferred from homology"/>
<dbReference type="EC" id="2.5.1.75" evidence="1"/>
<dbReference type="EMBL" id="CP001252">
    <property type="protein sequence ID" value="ACK48189.1"/>
    <property type="molecule type" value="Genomic_DNA"/>
</dbReference>
<dbReference type="RefSeq" id="WP_012588620.1">
    <property type="nucleotide sequence ID" value="NC_011663.1"/>
</dbReference>
<dbReference type="SMR" id="B8ECA4"/>
<dbReference type="KEGG" id="sbp:Sbal223_3711"/>
<dbReference type="HOGENOM" id="CLU_032616_0_0_6"/>
<dbReference type="Proteomes" id="UP000002507">
    <property type="component" value="Chromosome"/>
</dbReference>
<dbReference type="GO" id="GO:0005524">
    <property type="term" value="F:ATP binding"/>
    <property type="evidence" value="ECO:0007669"/>
    <property type="project" value="UniProtKB-UniRule"/>
</dbReference>
<dbReference type="GO" id="GO:0052381">
    <property type="term" value="F:tRNA dimethylallyltransferase activity"/>
    <property type="evidence" value="ECO:0007669"/>
    <property type="project" value="UniProtKB-UniRule"/>
</dbReference>
<dbReference type="GO" id="GO:0006400">
    <property type="term" value="P:tRNA modification"/>
    <property type="evidence" value="ECO:0007669"/>
    <property type="project" value="TreeGrafter"/>
</dbReference>
<dbReference type="FunFam" id="1.10.20.140:FF:000001">
    <property type="entry name" value="tRNA dimethylallyltransferase"/>
    <property type="match status" value="1"/>
</dbReference>
<dbReference type="Gene3D" id="1.10.20.140">
    <property type="match status" value="1"/>
</dbReference>
<dbReference type="Gene3D" id="3.40.50.300">
    <property type="entry name" value="P-loop containing nucleotide triphosphate hydrolases"/>
    <property type="match status" value="1"/>
</dbReference>
<dbReference type="HAMAP" id="MF_00185">
    <property type="entry name" value="IPP_trans"/>
    <property type="match status" value="1"/>
</dbReference>
<dbReference type="InterPro" id="IPR039657">
    <property type="entry name" value="Dimethylallyltransferase"/>
</dbReference>
<dbReference type="InterPro" id="IPR018022">
    <property type="entry name" value="IPT"/>
</dbReference>
<dbReference type="InterPro" id="IPR027417">
    <property type="entry name" value="P-loop_NTPase"/>
</dbReference>
<dbReference type="NCBIfam" id="TIGR00174">
    <property type="entry name" value="miaA"/>
    <property type="match status" value="1"/>
</dbReference>
<dbReference type="PANTHER" id="PTHR11088">
    <property type="entry name" value="TRNA DIMETHYLALLYLTRANSFERASE"/>
    <property type="match status" value="1"/>
</dbReference>
<dbReference type="PANTHER" id="PTHR11088:SF60">
    <property type="entry name" value="TRNA DIMETHYLALLYLTRANSFERASE"/>
    <property type="match status" value="1"/>
</dbReference>
<dbReference type="Pfam" id="PF01715">
    <property type="entry name" value="IPPT"/>
    <property type="match status" value="1"/>
</dbReference>
<dbReference type="SUPFAM" id="SSF52540">
    <property type="entry name" value="P-loop containing nucleoside triphosphate hydrolases"/>
    <property type="match status" value="1"/>
</dbReference>
<name>MIAA_SHEB2</name>
<reference key="1">
    <citation type="submission" date="2008-12" db="EMBL/GenBank/DDBJ databases">
        <title>Complete sequence of chromosome of Shewanella baltica OS223.</title>
        <authorList>
            <consortium name="US DOE Joint Genome Institute"/>
            <person name="Lucas S."/>
            <person name="Copeland A."/>
            <person name="Lapidus A."/>
            <person name="Glavina del Rio T."/>
            <person name="Dalin E."/>
            <person name="Tice H."/>
            <person name="Bruce D."/>
            <person name="Goodwin L."/>
            <person name="Pitluck S."/>
            <person name="Chertkov O."/>
            <person name="Meincke L."/>
            <person name="Brettin T."/>
            <person name="Detter J.C."/>
            <person name="Han C."/>
            <person name="Kuske C.R."/>
            <person name="Larimer F."/>
            <person name="Land M."/>
            <person name="Hauser L."/>
            <person name="Kyrpides N."/>
            <person name="Ovchinnikova G."/>
            <person name="Brettar I."/>
            <person name="Rodrigues J."/>
            <person name="Konstantinidis K."/>
            <person name="Tiedje J."/>
        </authorList>
    </citation>
    <scope>NUCLEOTIDE SEQUENCE [LARGE SCALE GENOMIC DNA]</scope>
    <source>
        <strain>OS223</strain>
    </source>
</reference>
<organism>
    <name type="scientific">Shewanella baltica (strain OS223)</name>
    <dbReference type="NCBI Taxonomy" id="407976"/>
    <lineage>
        <taxon>Bacteria</taxon>
        <taxon>Pseudomonadati</taxon>
        <taxon>Pseudomonadota</taxon>
        <taxon>Gammaproteobacteria</taxon>
        <taxon>Alteromonadales</taxon>
        <taxon>Shewanellaceae</taxon>
        <taxon>Shewanella</taxon>
    </lineage>
</organism>